<sequence length="354" mass="39531">MKKILIIGLGLIGSSIALGIKKAHPEFEILGSDREEVENIAQKRGIIDSKVELVKGAQEADIIILAVPISVTLELLKQIATFDLKDGLLITDAGSTKSEIVELANQLFSGTKVKFIGGHPMAGSHKSGVMAADLNLFENAYYVLTEESQELRELLKGLHAKFIILDAKEHDKVTGQVSHFPHILASTLVWQSDDYAKEHPLVKHLAAGGFRDLTRIAEADSLMWTSVLLSNPEITLERIENFKKHLDEIALKITKRDSQAIEHFFEEGKKIRQAMEIHKGALPNFYDLFISVPDEKGVVLRVLALLQDFSITNIKINEENREDIHGQLQISFKRAEDLQEAREIIEKATDFTVV</sequence>
<gene>
    <name type="primary">tyrA</name>
    <name type="ordered locus">llmg_1927</name>
</gene>
<name>TYRA_LACLM</name>
<organism>
    <name type="scientific">Lactococcus lactis subsp. cremoris (strain MG1363)</name>
    <dbReference type="NCBI Taxonomy" id="416870"/>
    <lineage>
        <taxon>Bacteria</taxon>
        <taxon>Bacillati</taxon>
        <taxon>Bacillota</taxon>
        <taxon>Bacilli</taxon>
        <taxon>Lactobacillales</taxon>
        <taxon>Streptococcaceae</taxon>
        <taxon>Lactococcus</taxon>
        <taxon>Lactococcus cremoris subsp. cremoris</taxon>
    </lineage>
</organism>
<accession>P43901</accession>
<accession>A2RMG6</accession>
<proteinExistence type="inferred from homology"/>
<feature type="chain" id="PRO_0000119194" description="Prephenate dehydrogenase">
    <location>
        <begin position="1"/>
        <end position="354"/>
    </location>
</feature>
<feature type="domain" description="Prephenate/arogenate dehydrogenase" evidence="2">
    <location>
        <begin position="2"/>
        <end position="283"/>
    </location>
</feature>
<feature type="domain" description="ACT" evidence="3">
    <location>
        <begin position="287"/>
        <end position="354"/>
    </location>
</feature>
<feature type="binding site" evidence="1">
    <location>
        <begin position="3"/>
        <end position="33"/>
    </location>
    <ligand>
        <name>NAD(+)</name>
        <dbReference type="ChEBI" id="CHEBI:57540"/>
    </ligand>
</feature>
<comment type="catalytic activity">
    <reaction>
        <text>prephenate + NAD(+) = 3-(4-hydroxyphenyl)pyruvate + CO2 + NADH</text>
        <dbReference type="Rhea" id="RHEA:13869"/>
        <dbReference type="ChEBI" id="CHEBI:16526"/>
        <dbReference type="ChEBI" id="CHEBI:29934"/>
        <dbReference type="ChEBI" id="CHEBI:36242"/>
        <dbReference type="ChEBI" id="CHEBI:57540"/>
        <dbReference type="ChEBI" id="CHEBI:57945"/>
        <dbReference type="EC" id="1.3.1.12"/>
    </reaction>
</comment>
<comment type="pathway">
    <text>Amino-acid biosynthesis; L-tyrosine biosynthesis; (4-hydroxyphenyl)pyruvate from prephenate (NAD(+) route): step 1/1.</text>
</comment>
<comment type="similarity">
    <text evidence="4">Belongs to the prephenate/arogenate dehydrogenase family.</text>
</comment>
<dbReference type="EC" id="1.3.1.12"/>
<dbReference type="EMBL" id="X78413">
    <property type="protein sequence ID" value="CAA55179.1"/>
    <property type="molecule type" value="Genomic_DNA"/>
</dbReference>
<dbReference type="EMBL" id="AM406671">
    <property type="protein sequence ID" value="CAL98496.1"/>
    <property type="molecule type" value="Genomic_DNA"/>
</dbReference>
<dbReference type="PIR" id="S52579">
    <property type="entry name" value="S52579"/>
</dbReference>
<dbReference type="RefSeq" id="WP_011835675.1">
    <property type="nucleotide sequence ID" value="NC_009004.1"/>
</dbReference>
<dbReference type="SMR" id="P43901"/>
<dbReference type="STRING" id="416870.llmg_1927"/>
<dbReference type="KEGG" id="llm:llmg_1927"/>
<dbReference type="eggNOG" id="COG0287">
    <property type="taxonomic scope" value="Bacteria"/>
</dbReference>
<dbReference type="HOGENOM" id="CLU_055968_2_1_9"/>
<dbReference type="OrthoDB" id="9802008at2"/>
<dbReference type="PhylomeDB" id="P43901"/>
<dbReference type="UniPathway" id="UPA00122">
    <property type="reaction ID" value="UER00961"/>
</dbReference>
<dbReference type="Proteomes" id="UP000000364">
    <property type="component" value="Chromosome"/>
</dbReference>
<dbReference type="GO" id="GO:0070403">
    <property type="term" value="F:NAD+ binding"/>
    <property type="evidence" value="ECO:0007669"/>
    <property type="project" value="InterPro"/>
</dbReference>
<dbReference type="GO" id="GO:0008977">
    <property type="term" value="F:prephenate dehydrogenase (NAD+) activity"/>
    <property type="evidence" value="ECO:0007669"/>
    <property type="project" value="UniProtKB-EC"/>
</dbReference>
<dbReference type="GO" id="GO:0004665">
    <property type="term" value="F:prephenate dehydrogenase (NADP+) activity"/>
    <property type="evidence" value="ECO:0007669"/>
    <property type="project" value="InterPro"/>
</dbReference>
<dbReference type="GO" id="GO:0006571">
    <property type="term" value="P:tyrosine biosynthetic process"/>
    <property type="evidence" value="ECO:0007669"/>
    <property type="project" value="UniProtKB-UniPathway"/>
</dbReference>
<dbReference type="FunFam" id="1.10.3660.10:FF:000003">
    <property type="entry name" value="Prephenate dehydrogenase"/>
    <property type="match status" value="1"/>
</dbReference>
<dbReference type="FunFam" id="3.40.50.720:FF:000208">
    <property type="entry name" value="Prephenate dehydrogenase"/>
    <property type="match status" value="1"/>
</dbReference>
<dbReference type="Gene3D" id="1.10.3660.10">
    <property type="entry name" value="6-phosphogluconate dehydrogenase C-terminal like domain"/>
    <property type="match status" value="1"/>
</dbReference>
<dbReference type="Gene3D" id="3.40.50.720">
    <property type="entry name" value="NAD(P)-binding Rossmann-like Domain"/>
    <property type="match status" value="1"/>
</dbReference>
<dbReference type="InterPro" id="IPR008927">
    <property type="entry name" value="6-PGluconate_DH-like_C_sf"/>
</dbReference>
<dbReference type="InterPro" id="IPR002912">
    <property type="entry name" value="ACT_dom"/>
</dbReference>
<dbReference type="InterPro" id="IPR036291">
    <property type="entry name" value="NAD(P)-bd_dom_sf"/>
</dbReference>
<dbReference type="InterPro" id="IPR046825">
    <property type="entry name" value="PDH_C"/>
</dbReference>
<dbReference type="InterPro" id="IPR046826">
    <property type="entry name" value="PDH_N"/>
</dbReference>
<dbReference type="InterPro" id="IPR050812">
    <property type="entry name" value="Preph/Arog_dehydrog"/>
</dbReference>
<dbReference type="InterPro" id="IPR003099">
    <property type="entry name" value="Prephen_DH"/>
</dbReference>
<dbReference type="NCBIfam" id="NF005105">
    <property type="entry name" value="PRK06545.1-3"/>
    <property type="match status" value="1"/>
</dbReference>
<dbReference type="PANTHER" id="PTHR21363">
    <property type="entry name" value="PREPHENATE DEHYDROGENASE"/>
    <property type="match status" value="1"/>
</dbReference>
<dbReference type="PANTHER" id="PTHR21363:SF0">
    <property type="entry name" value="PREPHENATE DEHYDROGENASE [NADP(+)]"/>
    <property type="match status" value="1"/>
</dbReference>
<dbReference type="Pfam" id="PF20463">
    <property type="entry name" value="PDH_C"/>
    <property type="match status" value="1"/>
</dbReference>
<dbReference type="Pfam" id="PF02153">
    <property type="entry name" value="PDH_N"/>
    <property type="match status" value="1"/>
</dbReference>
<dbReference type="SUPFAM" id="SSF48179">
    <property type="entry name" value="6-phosphogluconate dehydrogenase C-terminal domain-like"/>
    <property type="match status" value="1"/>
</dbReference>
<dbReference type="SUPFAM" id="SSF51735">
    <property type="entry name" value="NAD(P)-binding Rossmann-fold domains"/>
    <property type="match status" value="1"/>
</dbReference>
<dbReference type="PROSITE" id="PS51671">
    <property type="entry name" value="ACT"/>
    <property type="match status" value="1"/>
</dbReference>
<dbReference type="PROSITE" id="PS51176">
    <property type="entry name" value="PDH_ADH"/>
    <property type="match status" value="1"/>
</dbReference>
<keyword id="KW-0028">Amino-acid biosynthesis</keyword>
<keyword id="KW-0057">Aromatic amino acid biosynthesis</keyword>
<keyword id="KW-0520">NAD</keyword>
<keyword id="KW-0560">Oxidoreductase</keyword>
<keyword id="KW-0827">Tyrosine biosynthesis</keyword>
<protein>
    <recommendedName>
        <fullName>Prephenate dehydrogenase</fullName>
        <shortName>PDH</shortName>
        <ecNumber>1.3.1.12</ecNumber>
    </recommendedName>
</protein>
<evidence type="ECO:0000255" key="1"/>
<evidence type="ECO:0000255" key="2">
    <source>
        <dbReference type="PROSITE-ProRule" id="PRU00522"/>
    </source>
</evidence>
<evidence type="ECO:0000255" key="3">
    <source>
        <dbReference type="PROSITE-ProRule" id="PRU01007"/>
    </source>
</evidence>
<evidence type="ECO:0000305" key="4"/>
<reference key="1">
    <citation type="journal article" date="1995" name="Mol. Gen. Genet.">
        <title>Genetic aspects of aromatic amino acid biosynthesis in Lactococcus lactis.</title>
        <authorList>
            <person name="Griffin H.G."/>
            <person name="Gasson M.J."/>
        </authorList>
    </citation>
    <scope>NUCLEOTIDE SEQUENCE [GENOMIC DNA]</scope>
    <source>
        <strain>MG1363 / F15876</strain>
    </source>
</reference>
<reference key="2">
    <citation type="journal article" date="2007" name="J. Bacteriol.">
        <title>The complete genome sequence of the lactic acid bacterial paradigm Lactococcus lactis subsp. cremoris MG1363.</title>
        <authorList>
            <person name="Wegmann U."/>
            <person name="O'Connell-Motherway M."/>
            <person name="Zomer A."/>
            <person name="Buist G."/>
            <person name="Shearman C."/>
            <person name="Canchaya C."/>
            <person name="Ventura M."/>
            <person name="Goesmann A."/>
            <person name="Gasson M.J."/>
            <person name="Kuipers O.P."/>
            <person name="van Sinderen D."/>
            <person name="Kok J."/>
        </authorList>
    </citation>
    <scope>NUCLEOTIDE SEQUENCE [LARGE SCALE GENOMIC DNA]</scope>
    <source>
        <strain>MG1363</strain>
    </source>
</reference>